<protein>
    <recommendedName>
        <fullName evidence="1">Argininosuccinate synthase</fullName>
        <ecNumber evidence="1">6.3.4.5</ecNumber>
    </recommendedName>
    <alternativeName>
        <fullName evidence="1">Citrulline--aspartate ligase</fullName>
    </alternativeName>
</protein>
<accession>Q57FU2</accession>
<comment type="catalytic activity">
    <reaction evidence="1">
        <text>L-citrulline + L-aspartate + ATP = 2-(N(omega)-L-arginino)succinate + AMP + diphosphate + H(+)</text>
        <dbReference type="Rhea" id="RHEA:10932"/>
        <dbReference type="ChEBI" id="CHEBI:15378"/>
        <dbReference type="ChEBI" id="CHEBI:29991"/>
        <dbReference type="ChEBI" id="CHEBI:30616"/>
        <dbReference type="ChEBI" id="CHEBI:33019"/>
        <dbReference type="ChEBI" id="CHEBI:57472"/>
        <dbReference type="ChEBI" id="CHEBI:57743"/>
        <dbReference type="ChEBI" id="CHEBI:456215"/>
        <dbReference type="EC" id="6.3.4.5"/>
    </reaction>
</comment>
<comment type="pathway">
    <text evidence="1">Amino-acid biosynthesis; L-arginine biosynthesis; L-arginine from L-ornithine and carbamoyl phosphate: step 2/3.</text>
</comment>
<comment type="subunit">
    <text evidence="1">Homotetramer.</text>
</comment>
<comment type="subcellular location">
    <subcellularLocation>
        <location evidence="1">Cytoplasm</location>
    </subcellularLocation>
</comment>
<comment type="similarity">
    <text evidence="1">Belongs to the argininosuccinate synthase family. Type 1 subfamily.</text>
</comment>
<sequence length="406" mass="45273">MSKWKDVKKVVLAYSGGLDTSIILKWLQTELGAEVVTFTADLGQGEELEPARKKAEMLGIKEIFIEDVREEFVRDFVFPMFRANAVYEGVYLLGTSIARPLISKHLIDIAKKTGADAIAHGATGKGNDQVRFELSAYALNPDIKIIAPWRDWSFKSRTQLLEFAEQHQIPVAKDKKGEAPFSVDANLLHSSSEGKVLEDPSQEAPEYVHMRTISPETAPDKATIIKIGFEKGDAVSINGERLSPATLLAKLNDYGRDNGIGRLDLVENRFVGMKSRGVYETPGGTILLAAHRAIESITLDRGAAHLKDELMPRYAELIYYGFWFSPEREMLQAAIDHSQRHVEGEVTLKLYKGNVMVIGRESAKSLYSDKLVTFEDDQGAYDQKDAAGFIKLNALRLRTLAARDRK</sequence>
<proteinExistence type="inferred from homology"/>
<gene>
    <name evidence="1" type="primary">argG</name>
    <name type="ordered locus">BruAb1_0074</name>
</gene>
<reference key="1">
    <citation type="journal article" date="2005" name="J. Bacteriol.">
        <title>Completion of the genome sequence of Brucella abortus and comparison to the highly similar genomes of Brucella melitensis and Brucella suis.</title>
        <authorList>
            <person name="Halling S.M."/>
            <person name="Peterson-Burch B.D."/>
            <person name="Bricker B.J."/>
            <person name="Zuerner R.L."/>
            <person name="Qing Z."/>
            <person name="Li L.-L."/>
            <person name="Kapur V."/>
            <person name="Alt D.P."/>
            <person name="Olsen S.C."/>
        </authorList>
    </citation>
    <scope>NUCLEOTIDE SEQUENCE [LARGE SCALE GENOMIC DNA]</scope>
    <source>
        <strain>9-941</strain>
    </source>
</reference>
<evidence type="ECO:0000255" key="1">
    <source>
        <dbReference type="HAMAP-Rule" id="MF_00005"/>
    </source>
</evidence>
<organism>
    <name type="scientific">Brucella abortus biovar 1 (strain 9-941)</name>
    <dbReference type="NCBI Taxonomy" id="262698"/>
    <lineage>
        <taxon>Bacteria</taxon>
        <taxon>Pseudomonadati</taxon>
        <taxon>Pseudomonadota</taxon>
        <taxon>Alphaproteobacteria</taxon>
        <taxon>Hyphomicrobiales</taxon>
        <taxon>Brucellaceae</taxon>
        <taxon>Brucella/Ochrobactrum group</taxon>
        <taxon>Brucella</taxon>
    </lineage>
</organism>
<name>ASSY_BRUAB</name>
<keyword id="KW-0028">Amino-acid biosynthesis</keyword>
<keyword id="KW-0055">Arginine biosynthesis</keyword>
<keyword id="KW-0067">ATP-binding</keyword>
<keyword id="KW-0963">Cytoplasm</keyword>
<keyword id="KW-0436">Ligase</keyword>
<keyword id="KW-0547">Nucleotide-binding</keyword>
<dbReference type="EC" id="6.3.4.5" evidence="1"/>
<dbReference type="EMBL" id="AE017223">
    <property type="protein sequence ID" value="AAX73492.1"/>
    <property type="molecule type" value="Genomic_DNA"/>
</dbReference>
<dbReference type="RefSeq" id="WP_002965322.1">
    <property type="nucleotide sequence ID" value="NC_006932.1"/>
</dbReference>
<dbReference type="SMR" id="Q57FU2"/>
<dbReference type="EnsemblBacteria" id="AAX73492">
    <property type="protein sequence ID" value="AAX73492"/>
    <property type="gene ID" value="BruAb1_0074"/>
</dbReference>
<dbReference type="KEGG" id="bmb:BruAb1_0074"/>
<dbReference type="HOGENOM" id="CLU_032784_4_2_5"/>
<dbReference type="UniPathway" id="UPA00068">
    <property type="reaction ID" value="UER00113"/>
</dbReference>
<dbReference type="Proteomes" id="UP000000540">
    <property type="component" value="Chromosome I"/>
</dbReference>
<dbReference type="GO" id="GO:0005737">
    <property type="term" value="C:cytoplasm"/>
    <property type="evidence" value="ECO:0007669"/>
    <property type="project" value="UniProtKB-SubCell"/>
</dbReference>
<dbReference type="GO" id="GO:0004055">
    <property type="term" value="F:argininosuccinate synthase activity"/>
    <property type="evidence" value="ECO:0007669"/>
    <property type="project" value="UniProtKB-UniRule"/>
</dbReference>
<dbReference type="GO" id="GO:0005524">
    <property type="term" value="F:ATP binding"/>
    <property type="evidence" value="ECO:0007669"/>
    <property type="project" value="UniProtKB-UniRule"/>
</dbReference>
<dbReference type="GO" id="GO:0000053">
    <property type="term" value="P:argininosuccinate metabolic process"/>
    <property type="evidence" value="ECO:0007669"/>
    <property type="project" value="TreeGrafter"/>
</dbReference>
<dbReference type="GO" id="GO:0006526">
    <property type="term" value="P:L-arginine biosynthetic process"/>
    <property type="evidence" value="ECO:0007669"/>
    <property type="project" value="UniProtKB-UniRule"/>
</dbReference>
<dbReference type="GO" id="GO:0000050">
    <property type="term" value="P:urea cycle"/>
    <property type="evidence" value="ECO:0007669"/>
    <property type="project" value="TreeGrafter"/>
</dbReference>
<dbReference type="CDD" id="cd01999">
    <property type="entry name" value="ASS"/>
    <property type="match status" value="1"/>
</dbReference>
<dbReference type="FunFam" id="3.40.50.620:FF:000019">
    <property type="entry name" value="Argininosuccinate synthase"/>
    <property type="match status" value="1"/>
</dbReference>
<dbReference type="FunFam" id="3.90.1260.10:FF:000007">
    <property type="entry name" value="Argininosuccinate synthase"/>
    <property type="match status" value="1"/>
</dbReference>
<dbReference type="Gene3D" id="3.90.1260.10">
    <property type="entry name" value="Argininosuccinate synthetase, chain A, domain 2"/>
    <property type="match status" value="1"/>
</dbReference>
<dbReference type="Gene3D" id="3.40.50.620">
    <property type="entry name" value="HUPs"/>
    <property type="match status" value="1"/>
</dbReference>
<dbReference type="Gene3D" id="1.20.5.470">
    <property type="entry name" value="Single helix bin"/>
    <property type="match status" value="1"/>
</dbReference>
<dbReference type="HAMAP" id="MF_00005">
    <property type="entry name" value="Arg_succ_synth_type1"/>
    <property type="match status" value="1"/>
</dbReference>
<dbReference type="InterPro" id="IPR048268">
    <property type="entry name" value="Arginosuc_syn_C"/>
</dbReference>
<dbReference type="InterPro" id="IPR048267">
    <property type="entry name" value="Arginosuc_syn_N"/>
</dbReference>
<dbReference type="InterPro" id="IPR001518">
    <property type="entry name" value="Arginosuc_synth"/>
</dbReference>
<dbReference type="InterPro" id="IPR018223">
    <property type="entry name" value="Arginosuc_synth_CS"/>
</dbReference>
<dbReference type="InterPro" id="IPR023434">
    <property type="entry name" value="Arginosuc_synth_type_1_subfam"/>
</dbReference>
<dbReference type="InterPro" id="IPR024074">
    <property type="entry name" value="AS_cat/multimer_dom_body"/>
</dbReference>
<dbReference type="InterPro" id="IPR014729">
    <property type="entry name" value="Rossmann-like_a/b/a_fold"/>
</dbReference>
<dbReference type="NCBIfam" id="TIGR00032">
    <property type="entry name" value="argG"/>
    <property type="match status" value="1"/>
</dbReference>
<dbReference type="NCBIfam" id="NF001770">
    <property type="entry name" value="PRK00509.1"/>
    <property type="match status" value="1"/>
</dbReference>
<dbReference type="PANTHER" id="PTHR11587">
    <property type="entry name" value="ARGININOSUCCINATE SYNTHASE"/>
    <property type="match status" value="1"/>
</dbReference>
<dbReference type="PANTHER" id="PTHR11587:SF2">
    <property type="entry name" value="ARGININOSUCCINATE SYNTHASE"/>
    <property type="match status" value="1"/>
</dbReference>
<dbReference type="Pfam" id="PF20979">
    <property type="entry name" value="Arginosuc_syn_C"/>
    <property type="match status" value="1"/>
</dbReference>
<dbReference type="Pfam" id="PF00764">
    <property type="entry name" value="Arginosuc_synth"/>
    <property type="match status" value="1"/>
</dbReference>
<dbReference type="SUPFAM" id="SSF52402">
    <property type="entry name" value="Adenine nucleotide alpha hydrolases-like"/>
    <property type="match status" value="1"/>
</dbReference>
<dbReference type="SUPFAM" id="SSF69864">
    <property type="entry name" value="Argininosuccinate synthetase, C-terminal domain"/>
    <property type="match status" value="1"/>
</dbReference>
<dbReference type="PROSITE" id="PS00564">
    <property type="entry name" value="ARGININOSUCCIN_SYN_1"/>
    <property type="match status" value="1"/>
</dbReference>
<dbReference type="PROSITE" id="PS00565">
    <property type="entry name" value="ARGININOSUCCIN_SYN_2"/>
    <property type="match status" value="1"/>
</dbReference>
<feature type="chain" id="PRO_0000263907" description="Argininosuccinate synthase">
    <location>
        <begin position="1"/>
        <end position="406"/>
    </location>
</feature>
<feature type="binding site" evidence="1">
    <location>
        <begin position="13"/>
        <end position="21"/>
    </location>
    <ligand>
        <name>ATP</name>
        <dbReference type="ChEBI" id="CHEBI:30616"/>
    </ligand>
</feature>
<feature type="binding site" evidence="1">
    <location>
        <position position="40"/>
    </location>
    <ligand>
        <name>ATP</name>
        <dbReference type="ChEBI" id="CHEBI:30616"/>
    </ligand>
</feature>
<feature type="binding site" evidence="1">
    <location>
        <position position="91"/>
    </location>
    <ligand>
        <name>L-citrulline</name>
        <dbReference type="ChEBI" id="CHEBI:57743"/>
    </ligand>
</feature>
<feature type="binding site" evidence="1">
    <location>
        <position position="96"/>
    </location>
    <ligand>
        <name>L-citrulline</name>
        <dbReference type="ChEBI" id="CHEBI:57743"/>
    </ligand>
</feature>
<feature type="binding site" evidence="1">
    <location>
        <position position="121"/>
    </location>
    <ligand>
        <name>ATP</name>
        <dbReference type="ChEBI" id="CHEBI:30616"/>
    </ligand>
</feature>
<feature type="binding site" evidence="1">
    <location>
        <position position="123"/>
    </location>
    <ligand>
        <name>L-aspartate</name>
        <dbReference type="ChEBI" id="CHEBI:29991"/>
    </ligand>
</feature>
<feature type="binding site" evidence="1">
    <location>
        <position position="127"/>
    </location>
    <ligand>
        <name>L-aspartate</name>
        <dbReference type="ChEBI" id="CHEBI:29991"/>
    </ligand>
</feature>
<feature type="binding site" evidence="1">
    <location>
        <position position="127"/>
    </location>
    <ligand>
        <name>L-citrulline</name>
        <dbReference type="ChEBI" id="CHEBI:57743"/>
    </ligand>
</feature>
<feature type="binding site" evidence="1">
    <location>
        <position position="128"/>
    </location>
    <ligand>
        <name>L-aspartate</name>
        <dbReference type="ChEBI" id="CHEBI:29991"/>
    </ligand>
</feature>
<feature type="binding site" evidence="1">
    <location>
        <position position="131"/>
    </location>
    <ligand>
        <name>L-citrulline</name>
        <dbReference type="ChEBI" id="CHEBI:57743"/>
    </ligand>
</feature>
<feature type="binding site" evidence="1">
    <location>
        <position position="182"/>
    </location>
    <ligand>
        <name>L-citrulline</name>
        <dbReference type="ChEBI" id="CHEBI:57743"/>
    </ligand>
</feature>
<feature type="binding site" evidence="1">
    <location>
        <position position="191"/>
    </location>
    <ligand>
        <name>L-citrulline</name>
        <dbReference type="ChEBI" id="CHEBI:57743"/>
    </ligand>
</feature>
<feature type="binding site" evidence="1">
    <location>
        <position position="267"/>
    </location>
    <ligand>
        <name>L-citrulline</name>
        <dbReference type="ChEBI" id="CHEBI:57743"/>
    </ligand>
</feature>
<feature type="binding site" evidence="1">
    <location>
        <position position="279"/>
    </location>
    <ligand>
        <name>L-citrulline</name>
        <dbReference type="ChEBI" id="CHEBI:57743"/>
    </ligand>
</feature>